<dbReference type="EC" id="3.1.26.5" evidence="1"/>
<dbReference type="EMBL" id="AJ235272">
    <property type="protein sequence ID" value="CAA15055.1"/>
    <property type="molecule type" value="Genomic_DNA"/>
</dbReference>
<dbReference type="PIR" id="E71666">
    <property type="entry name" value="E71666"/>
</dbReference>
<dbReference type="RefSeq" id="NP_220979.1">
    <property type="nucleotide sequence ID" value="NC_000963.1"/>
</dbReference>
<dbReference type="SMR" id="Q9ZCU8"/>
<dbReference type="STRING" id="272947.gene:17555690"/>
<dbReference type="EnsemblBacteria" id="CAA15055">
    <property type="protein sequence ID" value="CAA15055"/>
    <property type="gene ID" value="CAA15055"/>
</dbReference>
<dbReference type="KEGG" id="rpr:RP611"/>
<dbReference type="PATRIC" id="fig|272947.5.peg.630"/>
<dbReference type="eggNOG" id="COG0594">
    <property type="taxonomic scope" value="Bacteria"/>
</dbReference>
<dbReference type="HOGENOM" id="CLU_2047938_0_0_5"/>
<dbReference type="OrthoDB" id="7160815at2"/>
<dbReference type="Proteomes" id="UP000002480">
    <property type="component" value="Chromosome"/>
</dbReference>
<dbReference type="GO" id="GO:0030677">
    <property type="term" value="C:ribonuclease P complex"/>
    <property type="evidence" value="ECO:0007669"/>
    <property type="project" value="TreeGrafter"/>
</dbReference>
<dbReference type="GO" id="GO:0042781">
    <property type="term" value="F:3'-tRNA processing endoribonuclease activity"/>
    <property type="evidence" value="ECO:0007669"/>
    <property type="project" value="TreeGrafter"/>
</dbReference>
<dbReference type="GO" id="GO:0004526">
    <property type="term" value="F:ribonuclease P activity"/>
    <property type="evidence" value="ECO:0007669"/>
    <property type="project" value="UniProtKB-UniRule"/>
</dbReference>
<dbReference type="GO" id="GO:0000049">
    <property type="term" value="F:tRNA binding"/>
    <property type="evidence" value="ECO:0007669"/>
    <property type="project" value="UniProtKB-UniRule"/>
</dbReference>
<dbReference type="GO" id="GO:0001682">
    <property type="term" value="P:tRNA 5'-leader removal"/>
    <property type="evidence" value="ECO:0007669"/>
    <property type="project" value="UniProtKB-UniRule"/>
</dbReference>
<dbReference type="Gene3D" id="3.30.230.10">
    <property type="match status" value="1"/>
</dbReference>
<dbReference type="HAMAP" id="MF_00227">
    <property type="entry name" value="RNase_P"/>
    <property type="match status" value="1"/>
</dbReference>
<dbReference type="InterPro" id="IPR020568">
    <property type="entry name" value="Ribosomal_Su5_D2-typ_SF"/>
</dbReference>
<dbReference type="InterPro" id="IPR014721">
    <property type="entry name" value="Ribsml_uS5_D2-typ_fold_subgr"/>
</dbReference>
<dbReference type="InterPro" id="IPR000100">
    <property type="entry name" value="RNase_P"/>
</dbReference>
<dbReference type="InterPro" id="IPR020539">
    <property type="entry name" value="RNase_P_CS"/>
</dbReference>
<dbReference type="NCBIfam" id="TIGR00188">
    <property type="entry name" value="rnpA"/>
    <property type="match status" value="1"/>
</dbReference>
<dbReference type="PANTHER" id="PTHR33992">
    <property type="entry name" value="RIBONUCLEASE P PROTEIN COMPONENT"/>
    <property type="match status" value="1"/>
</dbReference>
<dbReference type="PANTHER" id="PTHR33992:SF1">
    <property type="entry name" value="RIBONUCLEASE P PROTEIN COMPONENT"/>
    <property type="match status" value="1"/>
</dbReference>
<dbReference type="Pfam" id="PF00825">
    <property type="entry name" value="Ribonuclease_P"/>
    <property type="match status" value="1"/>
</dbReference>
<dbReference type="SUPFAM" id="SSF54211">
    <property type="entry name" value="Ribosomal protein S5 domain 2-like"/>
    <property type="match status" value="1"/>
</dbReference>
<dbReference type="PROSITE" id="PS00648">
    <property type="entry name" value="RIBONUCLEASE_P"/>
    <property type="match status" value="1"/>
</dbReference>
<protein>
    <recommendedName>
        <fullName evidence="1">Ribonuclease P protein component</fullName>
        <shortName evidence="1">RNase P protein</shortName>
        <shortName evidence="1">RNaseP protein</shortName>
        <ecNumber evidence="1">3.1.26.5</ecNumber>
    </recommendedName>
    <alternativeName>
        <fullName evidence="1">Protein C5</fullName>
    </alternativeName>
</protein>
<comment type="function">
    <text evidence="1">RNaseP catalyzes the removal of the 5'-leader sequence from pre-tRNA to produce the mature 5'-terminus. It can also cleave other RNA substrates such as 4.5S RNA. The protein component plays an auxiliary but essential role in vivo by binding to the 5'-leader sequence and broadening the substrate specificity of the ribozyme.</text>
</comment>
<comment type="catalytic activity">
    <reaction evidence="1">
        <text>Endonucleolytic cleavage of RNA, removing 5'-extranucleotides from tRNA precursor.</text>
        <dbReference type="EC" id="3.1.26.5"/>
    </reaction>
</comment>
<comment type="subunit">
    <text evidence="1">Consists of a catalytic RNA component (M1 or rnpB) and a protein subunit.</text>
</comment>
<comment type="similarity">
    <text evidence="1">Belongs to the RnpA family.</text>
</comment>
<sequence>MKLCITSLKNQKEFELINKLGEKFYERYFILVIAKKLPKIFLESKYNTFLGIKVSRKLNKKAVVRNKIKRRIRHLMRIIVNDSNFKAIKFAIIIIPKKGFEEINFSHLQYELSKIILRNIY</sequence>
<organism>
    <name type="scientific">Rickettsia prowazekii (strain Madrid E)</name>
    <dbReference type="NCBI Taxonomy" id="272947"/>
    <lineage>
        <taxon>Bacteria</taxon>
        <taxon>Pseudomonadati</taxon>
        <taxon>Pseudomonadota</taxon>
        <taxon>Alphaproteobacteria</taxon>
        <taxon>Rickettsiales</taxon>
        <taxon>Rickettsiaceae</taxon>
        <taxon>Rickettsieae</taxon>
        <taxon>Rickettsia</taxon>
        <taxon>typhus group</taxon>
    </lineage>
</organism>
<keyword id="KW-0255">Endonuclease</keyword>
<keyword id="KW-0378">Hydrolase</keyword>
<keyword id="KW-0540">Nuclease</keyword>
<keyword id="KW-1185">Reference proteome</keyword>
<keyword id="KW-0694">RNA-binding</keyword>
<keyword id="KW-0819">tRNA processing</keyword>
<evidence type="ECO:0000255" key="1">
    <source>
        <dbReference type="HAMAP-Rule" id="MF_00227"/>
    </source>
</evidence>
<feature type="chain" id="PRO_0000198518" description="Ribonuclease P protein component">
    <location>
        <begin position="1"/>
        <end position="121"/>
    </location>
</feature>
<accession>Q9ZCU8</accession>
<reference key="1">
    <citation type="journal article" date="1998" name="Nature">
        <title>The genome sequence of Rickettsia prowazekii and the origin of mitochondria.</title>
        <authorList>
            <person name="Andersson S.G.E."/>
            <person name="Zomorodipour A."/>
            <person name="Andersson J.O."/>
            <person name="Sicheritz-Ponten T."/>
            <person name="Alsmark U.C.M."/>
            <person name="Podowski R.M."/>
            <person name="Naeslund A.K."/>
            <person name="Eriksson A.-S."/>
            <person name="Winkler H.H."/>
            <person name="Kurland C.G."/>
        </authorList>
    </citation>
    <scope>NUCLEOTIDE SEQUENCE [LARGE SCALE GENOMIC DNA]</scope>
    <source>
        <strain>Madrid E</strain>
    </source>
</reference>
<proteinExistence type="inferred from homology"/>
<gene>
    <name evidence="1" type="primary">rnpA</name>
    <name type="ordered locus">RP611</name>
</gene>
<name>RNPA_RICPR</name>